<accession>P23405</accession>
<gene>
    <name evidence="1" type="primary">rpl14</name>
</gene>
<reference key="1">
    <citation type="journal article" date="1990" name="Mol. Gen. Genet.">
        <title>The cyanelle S10 spc ribosomal protein gene operon from Cyanophora paradoxa.</title>
        <authorList>
            <person name="Michalowski C.B."/>
            <person name="Pfanzagl B."/>
            <person name="Loeffelhardt W."/>
            <person name="Bohnert H.J."/>
        </authorList>
    </citation>
    <scope>NUCLEOTIDE SEQUENCE [GENOMIC DNA]</scope>
    <source>
        <strain>UTEX LB 555 / Pringsheim</strain>
    </source>
</reference>
<reference key="2">
    <citation type="journal article" date="1995" name="Plant Mol. Biol. Rep.">
        <title>Nucleotide sequence of the cyanelle DNA from Cyanophora paradoxa.</title>
        <authorList>
            <person name="Stirewalt V.L."/>
            <person name="Michalowski C.B."/>
            <person name="Loeffelhardt W."/>
            <person name="Bohnert H.J."/>
            <person name="Bryant D.A."/>
        </authorList>
    </citation>
    <scope>NUCLEOTIDE SEQUENCE [LARGE SCALE GENOMIC DNA]</scope>
    <source>
        <strain>UTEX LB 555 / Pringsheim</strain>
    </source>
</reference>
<reference key="3">
    <citation type="book" date="1997" name="Eukaryotism and symbiosis">
        <title>The complete sequence of the cyanelle genome of Cyanophora paradoxa: the genetic complexity of a primitive plastid.</title>
        <editorList>
            <person name="Schenk H.E.A."/>
            <person name="Herrmann R."/>
            <person name="Jeon K.W."/>
            <person name="Mueller N.E."/>
            <person name="Schwemmler W."/>
        </editorList>
        <authorList>
            <person name="Loeffelhardt W."/>
            <person name="Stirewalt V.L."/>
            <person name="Michalowski C.B."/>
            <person name="Annarella M."/>
            <person name="Farley J.Y."/>
            <person name="Schluchter W.M."/>
            <person name="Chung S."/>
            <person name="Newmann-Spallart C."/>
            <person name="Steiner J.M."/>
            <person name="Jakowitsch J."/>
            <person name="Bohnert H.J."/>
            <person name="Bryant D.A."/>
        </authorList>
    </citation>
    <scope>NUCLEOTIDE SEQUENCE [LARGE SCALE GENOMIC DNA]</scope>
    <source>
        <strain>UTEX LB 555 / Pringsheim</strain>
    </source>
</reference>
<proteinExistence type="inferred from homology"/>
<dbReference type="EMBL" id="M30487">
    <property type="protein sequence ID" value="AAA63624.1"/>
    <property type="molecule type" value="Genomic_DNA"/>
</dbReference>
<dbReference type="EMBL" id="U30821">
    <property type="protein sequence ID" value="AAA81224.1"/>
    <property type="molecule type" value="Genomic_DNA"/>
</dbReference>
<dbReference type="PIR" id="S12215">
    <property type="entry name" value="R5KT14"/>
</dbReference>
<dbReference type="RefSeq" id="NP_043193.1">
    <property type="nucleotide sequence ID" value="NC_001675.1"/>
</dbReference>
<dbReference type="SMR" id="P23405"/>
<dbReference type="GeneID" id="801607"/>
<dbReference type="GO" id="GO:0009842">
    <property type="term" value="C:cyanelle"/>
    <property type="evidence" value="ECO:0007669"/>
    <property type="project" value="UniProtKB-SubCell"/>
</dbReference>
<dbReference type="GO" id="GO:0022625">
    <property type="term" value="C:cytosolic large ribosomal subunit"/>
    <property type="evidence" value="ECO:0007669"/>
    <property type="project" value="TreeGrafter"/>
</dbReference>
<dbReference type="GO" id="GO:0070180">
    <property type="term" value="F:large ribosomal subunit rRNA binding"/>
    <property type="evidence" value="ECO:0007669"/>
    <property type="project" value="TreeGrafter"/>
</dbReference>
<dbReference type="GO" id="GO:0003735">
    <property type="term" value="F:structural constituent of ribosome"/>
    <property type="evidence" value="ECO:0007669"/>
    <property type="project" value="InterPro"/>
</dbReference>
<dbReference type="GO" id="GO:0006412">
    <property type="term" value="P:translation"/>
    <property type="evidence" value="ECO:0007669"/>
    <property type="project" value="InterPro"/>
</dbReference>
<dbReference type="CDD" id="cd00337">
    <property type="entry name" value="Ribosomal_uL14"/>
    <property type="match status" value="1"/>
</dbReference>
<dbReference type="FunFam" id="2.40.150.20:FF:000001">
    <property type="entry name" value="50S ribosomal protein L14"/>
    <property type="match status" value="1"/>
</dbReference>
<dbReference type="Gene3D" id="2.40.150.20">
    <property type="entry name" value="Ribosomal protein L14"/>
    <property type="match status" value="1"/>
</dbReference>
<dbReference type="HAMAP" id="MF_01367">
    <property type="entry name" value="Ribosomal_uL14"/>
    <property type="match status" value="1"/>
</dbReference>
<dbReference type="InterPro" id="IPR000218">
    <property type="entry name" value="Ribosomal_uL14"/>
</dbReference>
<dbReference type="InterPro" id="IPR005745">
    <property type="entry name" value="Ribosomal_uL14_bac-type"/>
</dbReference>
<dbReference type="InterPro" id="IPR019972">
    <property type="entry name" value="Ribosomal_uL14_CS"/>
</dbReference>
<dbReference type="InterPro" id="IPR036853">
    <property type="entry name" value="Ribosomal_uL14_sf"/>
</dbReference>
<dbReference type="NCBIfam" id="TIGR01067">
    <property type="entry name" value="rplN_bact"/>
    <property type="match status" value="1"/>
</dbReference>
<dbReference type="PANTHER" id="PTHR11761">
    <property type="entry name" value="50S/60S RIBOSOMAL PROTEIN L14/L23"/>
    <property type="match status" value="1"/>
</dbReference>
<dbReference type="PANTHER" id="PTHR11761:SF3">
    <property type="entry name" value="LARGE RIBOSOMAL SUBUNIT PROTEIN UL14M"/>
    <property type="match status" value="1"/>
</dbReference>
<dbReference type="Pfam" id="PF00238">
    <property type="entry name" value="Ribosomal_L14"/>
    <property type="match status" value="1"/>
</dbReference>
<dbReference type="SMART" id="SM01374">
    <property type="entry name" value="Ribosomal_L14"/>
    <property type="match status" value="1"/>
</dbReference>
<dbReference type="SUPFAM" id="SSF50193">
    <property type="entry name" value="Ribosomal protein L14"/>
    <property type="match status" value="1"/>
</dbReference>
<dbReference type="PROSITE" id="PS00049">
    <property type="entry name" value="RIBOSOMAL_L14"/>
    <property type="match status" value="1"/>
</dbReference>
<geneLocation type="cyanelle"/>
<comment type="function">
    <text evidence="1">Binds to 23S rRNA.</text>
</comment>
<comment type="subunit">
    <text evidence="1">Part of the 50S ribosomal subunit.</text>
</comment>
<comment type="subcellular location">
    <subcellularLocation>
        <location>Plastid</location>
        <location>Cyanelle</location>
    </subcellularLocation>
</comment>
<comment type="similarity">
    <text evidence="1">Belongs to the universal ribosomal protein uL14 family.</text>
</comment>
<name>RK14_CYAPA</name>
<sequence>MIQPQSYLTAADNSGARKLMCIRVLGGGNRRYARIGDVIVAVVKDGIPNIPIKKSDTVKAVIVRTRKELKRDNGMNICFDDNAAVIINADGNPRGTRVFGPVARELRDKNFTKIISLAPEVL</sequence>
<keyword id="KW-0194">Cyanelle</keyword>
<keyword id="KW-0934">Plastid</keyword>
<keyword id="KW-0687">Ribonucleoprotein</keyword>
<keyword id="KW-0689">Ribosomal protein</keyword>
<keyword id="KW-0694">RNA-binding</keyword>
<keyword id="KW-0699">rRNA-binding</keyword>
<organism>
    <name type="scientific">Cyanophora paradoxa</name>
    <dbReference type="NCBI Taxonomy" id="2762"/>
    <lineage>
        <taxon>Eukaryota</taxon>
        <taxon>Glaucocystophyceae</taxon>
        <taxon>Cyanophoraceae</taxon>
        <taxon>Cyanophora</taxon>
    </lineage>
</organism>
<feature type="chain" id="PRO_0000128579" description="Large ribosomal subunit protein uL14c">
    <location>
        <begin position="1"/>
        <end position="122"/>
    </location>
</feature>
<evidence type="ECO:0000255" key="1">
    <source>
        <dbReference type="HAMAP-Rule" id="MF_01367"/>
    </source>
</evidence>
<evidence type="ECO:0000305" key="2"/>
<protein>
    <recommendedName>
        <fullName evidence="1">Large ribosomal subunit protein uL14c</fullName>
    </recommendedName>
    <alternativeName>
        <fullName evidence="2">50S ribosomal protein L14, cyanelle</fullName>
    </alternativeName>
</protein>